<name>TUSA_ACTSZ</name>
<evidence type="ECO:0000255" key="1">
    <source>
        <dbReference type="HAMAP-Rule" id="MF_00413"/>
    </source>
</evidence>
<reference key="1">
    <citation type="journal article" date="2010" name="BMC Genomics">
        <title>A genomic perspective on the potential of Actinobacillus succinogenes for industrial succinate production.</title>
        <authorList>
            <person name="McKinlay J.B."/>
            <person name="Laivenieks M."/>
            <person name="Schindler B.D."/>
            <person name="McKinlay A.A."/>
            <person name="Siddaramappa S."/>
            <person name="Challacombe J.F."/>
            <person name="Lowry S.R."/>
            <person name="Clum A."/>
            <person name="Lapidus A.L."/>
            <person name="Burkhart K.B."/>
            <person name="Harkins V."/>
            <person name="Vieille C."/>
        </authorList>
    </citation>
    <scope>NUCLEOTIDE SEQUENCE [LARGE SCALE GENOMIC DNA]</scope>
    <source>
        <strain>ATCC 55618 / DSM 22257 / CCUG 43843 / 130Z</strain>
    </source>
</reference>
<feature type="chain" id="PRO_1000072280" description="Sulfur carrier protein TusA">
    <location>
        <begin position="1"/>
        <end position="79"/>
    </location>
</feature>
<feature type="active site" description="Cysteine persulfide intermediate" evidence="1">
    <location>
        <position position="17"/>
    </location>
</feature>
<sequence>MNNNIIHYTLDTLGLRCPEPVMLVRKQIRHMQNGEMLLVIADDPATTRDIPGFCQFMEHTLVRAEMERPPFRYWVKKGK</sequence>
<organism>
    <name type="scientific">Actinobacillus succinogenes (strain ATCC 55618 / DSM 22257 / CCUG 43843 / 130Z)</name>
    <dbReference type="NCBI Taxonomy" id="339671"/>
    <lineage>
        <taxon>Bacteria</taxon>
        <taxon>Pseudomonadati</taxon>
        <taxon>Pseudomonadota</taxon>
        <taxon>Gammaproteobacteria</taxon>
        <taxon>Pasteurellales</taxon>
        <taxon>Pasteurellaceae</taxon>
        <taxon>Actinobacillus</taxon>
    </lineage>
</organism>
<keyword id="KW-0963">Cytoplasm</keyword>
<keyword id="KW-1185">Reference proteome</keyword>
<accession>A6VLN8</accession>
<dbReference type="EMBL" id="CP000746">
    <property type="protein sequence ID" value="ABR73885.1"/>
    <property type="molecule type" value="Genomic_DNA"/>
</dbReference>
<dbReference type="RefSeq" id="WP_012072265.1">
    <property type="nucleotide sequence ID" value="NC_009655.1"/>
</dbReference>
<dbReference type="SMR" id="A6VLN8"/>
<dbReference type="STRING" id="339671.Asuc_0510"/>
<dbReference type="KEGG" id="asu:Asuc_0510"/>
<dbReference type="eggNOG" id="COG0425">
    <property type="taxonomic scope" value="Bacteria"/>
</dbReference>
<dbReference type="HOGENOM" id="CLU_165255_5_1_6"/>
<dbReference type="OrthoDB" id="9797352at2"/>
<dbReference type="Proteomes" id="UP000001114">
    <property type="component" value="Chromosome"/>
</dbReference>
<dbReference type="GO" id="GO:0005737">
    <property type="term" value="C:cytoplasm"/>
    <property type="evidence" value="ECO:0007669"/>
    <property type="project" value="UniProtKB-SubCell"/>
</dbReference>
<dbReference type="GO" id="GO:0097163">
    <property type="term" value="F:sulfur carrier activity"/>
    <property type="evidence" value="ECO:0007669"/>
    <property type="project" value="UniProtKB-UniRule"/>
</dbReference>
<dbReference type="GO" id="GO:0002143">
    <property type="term" value="P:tRNA wobble position uridine thiolation"/>
    <property type="evidence" value="ECO:0007669"/>
    <property type="project" value="InterPro"/>
</dbReference>
<dbReference type="CDD" id="cd03423">
    <property type="entry name" value="SirA"/>
    <property type="match status" value="1"/>
</dbReference>
<dbReference type="Gene3D" id="3.30.110.40">
    <property type="entry name" value="TusA-like domain"/>
    <property type="match status" value="1"/>
</dbReference>
<dbReference type="HAMAP" id="MF_00413">
    <property type="entry name" value="Thiourid_synth_A"/>
    <property type="match status" value="1"/>
</dbReference>
<dbReference type="InterPro" id="IPR022931">
    <property type="entry name" value="Sulphur_carrier_TusA"/>
</dbReference>
<dbReference type="InterPro" id="IPR001455">
    <property type="entry name" value="TusA-like"/>
</dbReference>
<dbReference type="InterPro" id="IPR036868">
    <property type="entry name" value="TusA-like_sf"/>
</dbReference>
<dbReference type="NCBIfam" id="NF001423">
    <property type="entry name" value="PRK00299.1"/>
    <property type="match status" value="1"/>
</dbReference>
<dbReference type="PANTHER" id="PTHR33279:SF2">
    <property type="entry name" value="SULFUR CARRIER PROTEIN TUSA"/>
    <property type="match status" value="1"/>
</dbReference>
<dbReference type="PANTHER" id="PTHR33279">
    <property type="entry name" value="SULFUR CARRIER PROTEIN YEDF-RELATED"/>
    <property type="match status" value="1"/>
</dbReference>
<dbReference type="Pfam" id="PF01206">
    <property type="entry name" value="TusA"/>
    <property type="match status" value="1"/>
</dbReference>
<dbReference type="SUPFAM" id="SSF64307">
    <property type="entry name" value="SirA-like"/>
    <property type="match status" value="1"/>
</dbReference>
<dbReference type="PROSITE" id="PS01148">
    <property type="entry name" value="UPF0033"/>
    <property type="match status" value="1"/>
</dbReference>
<protein>
    <recommendedName>
        <fullName evidence="1">Sulfur carrier protein TusA</fullName>
    </recommendedName>
</protein>
<proteinExistence type="inferred from homology"/>
<comment type="function">
    <text evidence="1">Sulfur carrier protein which probably makes part of a sulfur-relay system.</text>
</comment>
<comment type="subcellular location">
    <subcellularLocation>
        <location evidence="1">Cytoplasm</location>
    </subcellularLocation>
</comment>
<comment type="similarity">
    <text evidence="1">Belongs to the sulfur carrier protein TusA family.</text>
</comment>
<gene>
    <name evidence="1" type="primary">tusA</name>
    <name type="ordered locus">Asuc_0510</name>
</gene>